<evidence type="ECO:0000255" key="1">
    <source>
        <dbReference type="HAMAP-Rule" id="MF_01815"/>
    </source>
</evidence>
<accession>Q7NF35</accession>
<organism>
    <name type="scientific">Gloeobacter violaceus (strain ATCC 29082 / PCC 7421)</name>
    <dbReference type="NCBI Taxonomy" id="251221"/>
    <lineage>
        <taxon>Bacteria</taxon>
        <taxon>Bacillati</taxon>
        <taxon>Cyanobacteriota</taxon>
        <taxon>Cyanophyceae</taxon>
        <taxon>Gloeobacterales</taxon>
        <taxon>Gloeobacteraceae</taxon>
        <taxon>Gloeobacter</taxon>
    </lineage>
</organism>
<sequence>MPAVQMTGVGGAVPAQVLTNYHLSELVTTSDEWIASRTGIRSRRILAPGQSLTQLAARAATDALSQAGRSPLDVDLLILATSTPDDLFGGAAHLQHEIGAVRAVAFDLTAACSGFVFALATASQFVRTGTYRTVLVVGADALSRYTDWTDRATCVLFGDGAGAALLEAGEVEGILGFELRTDGARAGHLNIHCTAEAVPLAADMAATRARFASITMNGREVYRFAVEAVPDLIEKTLAACGVAPEQVKAYLLHQANQRILDSVASRLHVAPERMASNLADYGNTSSASVPLILQEWVQDGRIRAGDRVVLAGFGAGLSWGVLLARWGRL</sequence>
<feature type="chain" id="PRO_0000110430" description="Beta-ketoacyl-[acyl-carrier-protein] synthase III">
    <location>
        <begin position="1"/>
        <end position="329"/>
    </location>
</feature>
<feature type="region of interest" description="ACP-binding" evidence="1">
    <location>
        <begin position="254"/>
        <end position="258"/>
    </location>
</feature>
<feature type="active site" evidence="1">
    <location>
        <position position="112"/>
    </location>
</feature>
<feature type="active site" evidence="1">
    <location>
        <position position="253"/>
    </location>
</feature>
<feature type="active site" evidence="1">
    <location>
        <position position="283"/>
    </location>
</feature>
<comment type="function">
    <text evidence="1">Catalyzes the condensation reaction of fatty acid synthesis by the addition to an acyl acceptor of two carbons from malonyl-ACP. Catalyzes the first condensation reaction which initiates fatty acid synthesis and may therefore play a role in governing the total rate of fatty acid production. Possesses both acetoacetyl-ACP synthase and acetyl transacylase activities. Its substrate specificity determines the biosynthesis of branched-chain and/or straight-chain of fatty acids.</text>
</comment>
<comment type="catalytic activity">
    <reaction evidence="1">
        <text>malonyl-[ACP] + acetyl-CoA + H(+) = 3-oxobutanoyl-[ACP] + CO2 + CoA</text>
        <dbReference type="Rhea" id="RHEA:12080"/>
        <dbReference type="Rhea" id="RHEA-COMP:9623"/>
        <dbReference type="Rhea" id="RHEA-COMP:9625"/>
        <dbReference type="ChEBI" id="CHEBI:15378"/>
        <dbReference type="ChEBI" id="CHEBI:16526"/>
        <dbReference type="ChEBI" id="CHEBI:57287"/>
        <dbReference type="ChEBI" id="CHEBI:57288"/>
        <dbReference type="ChEBI" id="CHEBI:78449"/>
        <dbReference type="ChEBI" id="CHEBI:78450"/>
        <dbReference type="EC" id="2.3.1.180"/>
    </reaction>
</comment>
<comment type="pathway">
    <text evidence="1">Lipid metabolism; fatty acid biosynthesis.</text>
</comment>
<comment type="subunit">
    <text evidence="1">Homodimer.</text>
</comment>
<comment type="subcellular location">
    <subcellularLocation>
        <location evidence="1">Cytoplasm</location>
    </subcellularLocation>
</comment>
<comment type="domain">
    <text evidence="1">The last Arg residue of the ACP-binding site is essential for the weak association between ACP/AcpP and FabH.</text>
</comment>
<comment type="similarity">
    <text evidence="1">Belongs to the thiolase-like superfamily. FabH family.</text>
</comment>
<proteinExistence type="inferred from homology"/>
<gene>
    <name evidence="1" type="primary">fabH</name>
    <name type="ordered locus">glr3692</name>
</gene>
<name>FABH_GLOVI</name>
<keyword id="KW-0012">Acyltransferase</keyword>
<keyword id="KW-0963">Cytoplasm</keyword>
<keyword id="KW-0275">Fatty acid biosynthesis</keyword>
<keyword id="KW-0276">Fatty acid metabolism</keyword>
<keyword id="KW-0444">Lipid biosynthesis</keyword>
<keyword id="KW-0443">Lipid metabolism</keyword>
<keyword id="KW-0511">Multifunctional enzyme</keyword>
<keyword id="KW-1185">Reference proteome</keyword>
<keyword id="KW-0808">Transferase</keyword>
<dbReference type="EC" id="2.3.1.180" evidence="1"/>
<dbReference type="EMBL" id="BA000045">
    <property type="protein sequence ID" value="BAC91633.1"/>
    <property type="molecule type" value="Genomic_DNA"/>
</dbReference>
<dbReference type="RefSeq" id="NP_926638.1">
    <property type="nucleotide sequence ID" value="NC_005125.1"/>
</dbReference>
<dbReference type="SMR" id="Q7NF35"/>
<dbReference type="FunCoup" id="Q7NF35">
    <property type="interactions" value="216"/>
</dbReference>
<dbReference type="STRING" id="251221.gene:10761207"/>
<dbReference type="EnsemblBacteria" id="BAC91633">
    <property type="protein sequence ID" value="BAC91633"/>
    <property type="gene ID" value="BAC91633"/>
</dbReference>
<dbReference type="KEGG" id="gvi:glr3692"/>
<dbReference type="PATRIC" id="fig|251221.4.peg.3726"/>
<dbReference type="eggNOG" id="COG0332">
    <property type="taxonomic scope" value="Bacteria"/>
</dbReference>
<dbReference type="HOGENOM" id="CLU_039592_0_1_3"/>
<dbReference type="InParanoid" id="Q7NF35"/>
<dbReference type="OrthoDB" id="9815506at2"/>
<dbReference type="PhylomeDB" id="Q7NF35"/>
<dbReference type="UniPathway" id="UPA00094"/>
<dbReference type="Proteomes" id="UP000000557">
    <property type="component" value="Chromosome"/>
</dbReference>
<dbReference type="GO" id="GO:0005737">
    <property type="term" value="C:cytoplasm"/>
    <property type="evidence" value="ECO:0007669"/>
    <property type="project" value="UniProtKB-SubCell"/>
</dbReference>
<dbReference type="GO" id="GO:0004315">
    <property type="term" value="F:3-oxoacyl-[acyl-carrier-protein] synthase activity"/>
    <property type="evidence" value="ECO:0007669"/>
    <property type="project" value="InterPro"/>
</dbReference>
<dbReference type="GO" id="GO:0033818">
    <property type="term" value="F:beta-ketoacyl-acyl-carrier-protein synthase III activity"/>
    <property type="evidence" value="ECO:0007669"/>
    <property type="project" value="UniProtKB-UniRule"/>
</dbReference>
<dbReference type="GO" id="GO:0006633">
    <property type="term" value="P:fatty acid biosynthetic process"/>
    <property type="evidence" value="ECO:0007669"/>
    <property type="project" value="UniProtKB-UniRule"/>
</dbReference>
<dbReference type="CDD" id="cd00830">
    <property type="entry name" value="KAS_III"/>
    <property type="match status" value="1"/>
</dbReference>
<dbReference type="FunFam" id="3.40.47.10:FF:000004">
    <property type="entry name" value="3-oxoacyl-[acyl-carrier-protein] synthase 3"/>
    <property type="match status" value="1"/>
</dbReference>
<dbReference type="Gene3D" id="3.40.47.10">
    <property type="match status" value="1"/>
</dbReference>
<dbReference type="HAMAP" id="MF_01815">
    <property type="entry name" value="FabH"/>
    <property type="match status" value="1"/>
</dbReference>
<dbReference type="InterPro" id="IPR013747">
    <property type="entry name" value="ACP_syn_III_C"/>
</dbReference>
<dbReference type="InterPro" id="IPR013751">
    <property type="entry name" value="ACP_syn_III_N"/>
</dbReference>
<dbReference type="InterPro" id="IPR004655">
    <property type="entry name" value="FabH"/>
</dbReference>
<dbReference type="InterPro" id="IPR016039">
    <property type="entry name" value="Thiolase-like"/>
</dbReference>
<dbReference type="NCBIfam" id="TIGR00747">
    <property type="entry name" value="fabH"/>
    <property type="match status" value="1"/>
</dbReference>
<dbReference type="NCBIfam" id="NF006829">
    <property type="entry name" value="PRK09352.1"/>
    <property type="match status" value="1"/>
</dbReference>
<dbReference type="PANTHER" id="PTHR43091">
    <property type="entry name" value="3-OXOACYL-[ACYL-CARRIER-PROTEIN] SYNTHASE"/>
    <property type="match status" value="1"/>
</dbReference>
<dbReference type="PANTHER" id="PTHR43091:SF1">
    <property type="entry name" value="BETA-KETOACYL-[ACYL-CARRIER-PROTEIN] SYNTHASE III, CHLOROPLASTIC"/>
    <property type="match status" value="1"/>
</dbReference>
<dbReference type="Pfam" id="PF08545">
    <property type="entry name" value="ACP_syn_III"/>
    <property type="match status" value="1"/>
</dbReference>
<dbReference type="Pfam" id="PF08541">
    <property type="entry name" value="ACP_syn_III_C"/>
    <property type="match status" value="1"/>
</dbReference>
<dbReference type="SUPFAM" id="SSF53901">
    <property type="entry name" value="Thiolase-like"/>
    <property type="match status" value="1"/>
</dbReference>
<reference key="1">
    <citation type="journal article" date="2003" name="DNA Res.">
        <title>Complete genome structure of Gloeobacter violaceus PCC 7421, a cyanobacterium that lacks thylakoids.</title>
        <authorList>
            <person name="Nakamura Y."/>
            <person name="Kaneko T."/>
            <person name="Sato S."/>
            <person name="Mimuro M."/>
            <person name="Miyashita H."/>
            <person name="Tsuchiya T."/>
            <person name="Sasamoto S."/>
            <person name="Watanabe A."/>
            <person name="Kawashima K."/>
            <person name="Kishida Y."/>
            <person name="Kiyokawa C."/>
            <person name="Kohara M."/>
            <person name="Matsumoto M."/>
            <person name="Matsuno A."/>
            <person name="Nakazaki N."/>
            <person name="Shimpo S."/>
            <person name="Takeuchi C."/>
            <person name="Yamada M."/>
            <person name="Tabata S."/>
        </authorList>
    </citation>
    <scope>NUCLEOTIDE SEQUENCE [LARGE SCALE GENOMIC DNA]</scope>
    <source>
        <strain>ATCC 29082 / PCC 7421</strain>
    </source>
</reference>
<protein>
    <recommendedName>
        <fullName evidence="1">Beta-ketoacyl-[acyl-carrier-protein] synthase III</fullName>
        <shortName evidence="1">Beta-ketoacyl-ACP synthase III</shortName>
        <shortName evidence="1">KAS III</shortName>
        <ecNumber evidence="1">2.3.1.180</ecNumber>
    </recommendedName>
    <alternativeName>
        <fullName evidence="1">3-oxoacyl-[acyl-carrier-protein] synthase 3</fullName>
    </alternativeName>
    <alternativeName>
        <fullName evidence="1">3-oxoacyl-[acyl-carrier-protein] synthase III</fullName>
    </alternativeName>
</protein>